<sequence>MTELSPKYNPAEVEAGRYQKWLDADVFKPSGDQKAKPYSIVIPPPNVTGKLHLGHAWDTTLQDIIIRQKRMQGFDTLWLPGMDHAGIATQAKVEERLRGQGITRYDLGREKFLDKVWEWKDEYATTIKEQWGKMGLSVDYSRERFTLDEGLSKAVRKVFVDLYKKGWIYRGEFIINWDPAARTALSDIEVIHKDVEGAFYHMNYMLEDGSRALQVATTRPETMFGDVAVAVNPEDPRYKDLIGKHVILPIVNKLIPIVGDEHADPEFGTGVVKITPAHDPNDFEVGQRHNLPQVNVMNDDGTMNELAGDFAGMDRFEARQATVAKLEELGALVNIEKRVHSVGHSERSGAVVEPRLSTQWFVKMDELAKQAMDNQETDDRVDFYPPRFNDTFLQWMENVHDWVISRQLWWGHQIPAWYNAEGEIYVGEEAPEGDGWTQDEDVLDTWFSSALWPFSTMGWPDTDVEDFKRYFPTSTLVTGYDIIFFWVSRMIFQTLEFTGRQPFQNVLIHGLIRDEEGRKMSKSLGNGIDPMDVIEKYGADSLRWFLSNGSAPGQDVRFSYEKMDASWNFINKIWNISRYILMNNEGLTLEEAESNVAKVAASEAGNVTDQWILHNLNETIAKVTENFDKFEFGVAGHILYNFIWEEFANWYVELTKEVLYSDNEAEKVITRSVLLYTLDKILRLLHPIMPFVTEEIYAQYAQGSIVTAAYPTVTPAFENEAAHKGVESLKDLIRAVRNARAEVNVAPSKPITILVKTADSELEDFFTSNVNYIKRFTNPEKLEISSAIAAPELAMTSIITGAEIYLPLADLLNVEEELARLDKELAKWQKELDMVGKKLGNERFVANAKPEVVQKEKDKQADYQAKYDATQERIAEMQKLVK</sequence>
<name>SYV_STRP3</name>
<protein>
    <recommendedName>
        <fullName evidence="1">Valine--tRNA ligase</fullName>
        <ecNumber evidence="1">6.1.1.9</ecNumber>
    </recommendedName>
    <alternativeName>
        <fullName evidence="1">Valyl-tRNA synthetase</fullName>
        <shortName evidence="1">ValRS</shortName>
    </alternativeName>
</protein>
<proteinExistence type="inferred from homology"/>
<evidence type="ECO:0000255" key="1">
    <source>
        <dbReference type="HAMAP-Rule" id="MF_02004"/>
    </source>
</evidence>
<gene>
    <name evidence="1" type="primary">valS</name>
    <name type="ordered locus">SpyM3_1273</name>
</gene>
<organism>
    <name type="scientific">Streptococcus pyogenes serotype M3 (strain ATCC BAA-595 / MGAS315)</name>
    <dbReference type="NCBI Taxonomy" id="198466"/>
    <lineage>
        <taxon>Bacteria</taxon>
        <taxon>Bacillati</taxon>
        <taxon>Bacillota</taxon>
        <taxon>Bacilli</taxon>
        <taxon>Lactobacillales</taxon>
        <taxon>Streptococcaceae</taxon>
        <taxon>Streptococcus</taxon>
    </lineage>
</organism>
<keyword id="KW-0030">Aminoacyl-tRNA synthetase</keyword>
<keyword id="KW-0067">ATP-binding</keyword>
<keyword id="KW-0175">Coiled coil</keyword>
<keyword id="KW-0963">Cytoplasm</keyword>
<keyword id="KW-0436">Ligase</keyword>
<keyword id="KW-0547">Nucleotide-binding</keyword>
<keyword id="KW-0648">Protein biosynthesis</keyword>
<reference key="1">
    <citation type="journal article" date="2002" name="Proc. Natl. Acad. Sci. U.S.A.">
        <title>Genome sequence of a serotype M3 strain of group A Streptococcus: phage-encoded toxins, the high-virulence phenotype, and clone emergence.</title>
        <authorList>
            <person name="Beres S.B."/>
            <person name="Sylva G.L."/>
            <person name="Barbian K.D."/>
            <person name="Lei B."/>
            <person name="Hoff J.S."/>
            <person name="Mammarella N.D."/>
            <person name="Liu M.-Y."/>
            <person name="Smoot J.C."/>
            <person name="Porcella S.F."/>
            <person name="Parkins L.D."/>
            <person name="Campbell D.S."/>
            <person name="Smith T.M."/>
            <person name="McCormick J.K."/>
            <person name="Leung D.Y.M."/>
            <person name="Schlievert P.M."/>
            <person name="Musser J.M."/>
        </authorList>
    </citation>
    <scope>NUCLEOTIDE SEQUENCE [LARGE SCALE GENOMIC DNA]</scope>
    <source>
        <strain>ATCC BAA-595 / MGAS315</strain>
    </source>
</reference>
<accession>P0DG64</accession>
<accession>Q79XX8</accession>
<accession>Q8K6M9</accession>
<dbReference type="EC" id="6.1.1.9" evidence="1"/>
<dbReference type="EMBL" id="AE014074">
    <property type="protein sequence ID" value="AAM79880.1"/>
    <property type="molecule type" value="Genomic_DNA"/>
</dbReference>
<dbReference type="RefSeq" id="WP_011054774.1">
    <property type="nucleotide sequence ID" value="NC_004070.1"/>
</dbReference>
<dbReference type="SMR" id="P0DG64"/>
<dbReference type="KEGG" id="spg:SpyM3_1273"/>
<dbReference type="HOGENOM" id="CLU_001493_0_2_9"/>
<dbReference type="Proteomes" id="UP000000564">
    <property type="component" value="Chromosome"/>
</dbReference>
<dbReference type="GO" id="GO:0005829">
    <property type="term" value="C:cytosol"/>
    <property type="evidence" value="ECO:0007669"/>
    <property type="project" value="TreeGrafter"/>
</dbReference>
<dbReference type="GO" id="GO:0002161">
    <property type="term" value="F:aminoacyl-tRNA deacylase activity"/>
    <property type="evidence" value="ECO:0007669"/>
    <property type="project" value="InterPro"/>
</dbReference>
<dbReference type="GO" id="GO:0005524">
    <property type="term" value="F:ATP binding"/>
    <property type="evidence" value="ECO:0007669"/>
    <property type="project" value="UniProtKB-UniRule"/>
</dbReference>
<dbReference type="GO" id="GO:0004832">
    <property type="term" value="F:valine-tRNA ligase activity"/>
    <property type="evidence" value="ECO:0007669"/>
    <property type="project" value="UniProtKB-UniRule"/>
</dbReference>
<dbReference type="GO" id="GO:0006438">
    <property type="term" value="P:valyl-tRNA aminoacylation"/>
    <property type="evidence" value="ECO:0007669"/>
    <property type="project" value="UniProtKB-UniRule"/>
</dbReference>
<dbReference type="CDD" id="cd07962">
    <property type="entry name" value="Anticodon_Ia_Val"/>
    <property type="match status" value="1"/>
</dbReference>
<dbReference type="CDD" id="cd00817">
    <property type="entry name" value="ValRS_core"/>
    <property type="match status" value="1"/>
</dbReference>
<dbReference type="FunFam" id="1.10.287.380:FF:000001">
    <property type="entry name" value="Valine--tRNA ligase"/>
    <property type="match status" value="1"/>
</dbReference>
<dbReference type="FunFam" id="1.10.730.10:FF:000014">
    <property type="entry name" value="Valine--tRNA ligase"/>
    <property type="match status" value="1"/>
</dbReference>
<dbReference type="FunFam" id="3.40.50.620:FF:000032">
    <property type="entry name" value="Valine--tRNA ligase"/>
    <property type="match status" value="1"/>
</dbReference>
<dbReference type="FunFam" id="3.40.50.620:FF:000098">
    <property type="entry name" value="Valine--tRNA ligase"/>
    <property type="match status" value="1"/>
</dbReference>
<dbReference type="FunFam" id="3.90.740.10:FF:000005">
    <property type="entry name" value="Valine--tRNA ligase, mitochondrial"/>
    <property type="match status" value="1"/>
</dbReference>
<dbReference type="Gene3D" id="3.40.50.620">
    <property type="entry name" value="HUPs"/>
    <property type="match status" value="3"/>
</dbReference>
<dbReference type="Gene3D" id="1.10.730.10">
    <property type="entry name" value="Isoleucyl-tRNA Synthetase, Domain 1"/>
    <property type="match status" value="1"/>
</dbReference>
<dbReference type="Gene3D" id="1.10.287.380">
    <property type="entry name" value="Valyl-tRNA synthetase, C-terminal domain"/>
    <property type="match status" value="1"/>
</dbReference>
<dbReference type="Gene3D" id="3.90.740.10">
    <property type="entry name" value="Valyl/Leucyl/Isoleucyl-tRNA synthetase, editing domain"/>
    <property type="match status" value="1"/>
</dbReference>
<dbReference type="HAMAP" id="MF_02004">
    <property type="entry name" value="Val_tRNA_synth_type1"/>
    <property type="match status" value="1"/>
</dbReference>
<dbReference type="InterPro" id="IPR001412">
    <property type="entry name" value="aa-tRNA-synth_I_CS"/>
</dbReference>
<dbReference type="InterPro" id="IPR002300">
    <property type="entry name" value="aa-tRNA-synth_Ia"/>
</dbReference>
<dbReference type="InterPro" id="IPR033705">
    <property type="entry name" value="Anticodon_Ia_Val"/>
</dbReference>
<dbReference type="InterPro" id="IPR013155">
    <property type="entry name" value="M/V/L/I-tRNA-synth_anticd-bd"/>
</dbReference>
<dbReference type="InterPro" id="IPR014729">
    <property type="entry name" value="Rossmann-like_a/b/a_fold"/>
</dbReference>
<dbReference type="InterPro" id="IPR010978">
    <property type="entry name" value="tRNA-bd_arm"/>
</dbReference>
<dbReference type="InterPro" id="IPR009080">
    <property type="entry name" value="tRNAsynth_Ia_anticodon-bd"/>
</dbReference>
<dbReference type="InterPro" id="IPR037118">
    <property type="entry name" value="Val-tRNA_synth_C_sf"/>
</dbReference>
<dbReference type="InterPro" id="IPR019499">
    <property type="entry name" value="Val-tRNA_synth_tRNA-bd"/>
</dbReference>
<dbReference type="InterPro" id="IPR009008">
    <property type="entry name" value="Val/Leu/Ile-tRNA-synth_edit"/>
</dbReference>
<dbReference type="InterPro" id="IPR002303">
    <property type="entry name" value="Valyl-tRNA_ligase"/>
</dbReference>
<dbReference type="NCBIfam" id="NF004349">
    <property type="entry name" value="PRK05729.1"/>
    <property type="match status" value="1"/>
</dbReference>
<dbReference type="NCBIfam" id="TIGR00422">
    <property type="entry name" value="valS"/>
    <property type="match status" value="1"/>
</dbReference>
<dbReference type="PANTHER" id="PTHR11946:SF93">
    <property type="entry name" value="VALINE--TRNA LIGASE, CHLOROPLASTIC_MITOCHONDRIAL 2"/>
    <property type="match status" value="1"/>
</dbReference>
<dbReference type="PANTHER" id="PTHR11946">
    <property type="entry name" value="VALYL-TRNA SYNTHETASES"/>
    <property type="match status" value="1"/>
</dbReference>
<dbReference type="Pfam" id="PF08264">
    <property type="entry name" value="Anticodon_1"/>
    <property type="match status" value="1"/>
</dbReference>
<dbReference type="Pfam" id="PF00133">
    <property type="entry name" value="tRNA-synt_1"/>
    <property type="match status" value="2"/>
</dbReference>
<dbReference type="Pfam" id="PF10458">
    <property type="entry name" value="Val_tRNA-synt_C"/>
    <property type="match status" value="1"/>
</dbReference>
<dbReference type="PRINTS" id="PR00986">
    <property type="entry name" value="TRNASYNTHVAL"/>
</dbReference>
<dbReference type="SUPFAM" id="SSF47323">
    <property type="entry name" value="Anticodon-binding domain of a subclass of class I aminoacyl-tRNA synthetases"/>
    <property type="match status" value="1"/>
</dbReference>
<dbReference type="SUPFAM" id="SSF52374">
    <property type="entry name" value="Nucleotidylyl transferase"/>
    <property type="match status" value="1"/>
</dbReference>
<dbReference type="SUPFAM" id="SSF46589">
    <property type="entry name" value="tRNA-binding arm"/>
    <property type="match status" value="1"/>
</dbReference>
<dbReference type="SUPFAM" id="SSF50677">
    <property type="entry name" value="ValRS/IleRS/LeuRS editing domain"/>
    <property type="match status" value="1"/>
</dbReference>
<dbReference type="PROSITE" id="PS00178">
    <property type="entry name" value="AA_TRNA_LIGASE_I"/>
    <property type="match status" value="1"/>
</dbReference>
<feature type="chain" id="PRO_0000224579" description="Valine--tRNA ligase">
    <location>
        <begin position="1"/>
        <end position="882"/>
    </location>
</feature>
<feature type="coiled-coil region" evidence="1">
    <location>
        <begin position="808"/>
        <end position="882"/>
    </location>
</feature>
<feature type="short sequence motif" description="'HIGH' region">
    <location>
        <begin position="45"/>
        <end position="55"/>
    </location>
</feature>
<feature type="short sequence motif" description="'KMSKS' region">
    <location>
        <begin position="519"/>
        <end position="523"/>
    </location>
</feature>
<feature type="binding site" evidence="1">
    <location>
        <position position="522"/>
    </location>
    <ligand>
        <name>ATP</name>
        <dbReference type="ChEBI" id="CHEBI:30616"/>
    </ligand>
</feature>
<comment type="function">
    <text evidence="1">Catalyzes the attachment of valine to tRNA(Val). As ValRS can inadvertently accommodate and process structurally similar amino acids such as threonine, to avoid such errors, it has a 'posttransfer' editing activity that hydrolyzes mischarged Thr-tRNA(Val) in a tRNA-dependent manner.</text>
</comment>
<comment type="catalytic activity">
    <reaction evidence="1">
        <text>tRNA(Val) + L-valine + ATP = L-valyl-tRNA(Val) + AMP + diphosphate</text>
        <dbReference type="Rhea" id="RHEA:10704"/>
        <dbReference type="Rhea" id="RHEA-COMP:9672"/>
        <dbReference type="Rhea" id="RHEA-COMP:9708"/>
        <dbReference type="ChEBI" id="CHEBI:30616"/>
        <dbReference type="ChEBI" id="CHEBI:33019"/>
        <dbReference type="ChEBI" id="CHEBI:57762"/>
        <dbReference type="ChEBI" id="CHEBI:78442"/>
        <dbReference type="ChEBI" id="CHEBI:78537"/>
        <dbReference type="ChEBI" id="CHEBI:456215"/>
        <dbReference type="EC" id="6.1.1.9"/>
    </reaction>
</comment>
<comment type="subunit">
    <text evidence="1">Monomer.</text>
</comment>
<comment type="subcellular location">
    <subcellularLocation>
        <location evidence="1">Cytoplasm</location>
    </subcellularLocation>
</comment>
<comment type="domain">
    <text evidence="1">ValRS has two distinct active sites: one for aminoacylation and one for editing. The misactivated threonine is translocated from the active site to the editing site.</text>
</comment>
<comment type="domain">
    <text evidence="1">The C-terminal coiled-coil domain is crucial for aminoacylation activity.</text>
</comment>
<comment type="similarity">
    <text evidence="1">Belongs to the class-I aminoacyl-tRNA synthetase family. ValS type 1 subfamily.</text>
</comment>